<proteinExistence type="inferred from homology"/>
<accession>Q6GGX3</accession>
<sequence length="10746" mass="1157163">MNYRDKIQKFSIRKYTVGTFSTVIATLVFLGLNTSQAQAAETNQPASALKQKQQNGDTQTENREVEVQNSQNGQSLSAPIENEQPNNNQTNHVDASAVQSSTTEHDQPVSQNEQAKKDTAAATPTQSAKAASKHEQSESRAANKKENDNKATHVESHEANVVTASDSSDSGNVQHDRNELQAFFDANYHDYRFIDRENADSGTFNYVKGIFDKINTLLGSNDPINNKDLQLAYKELEQAVALIRTMPQRQQTSRRSSRIQTRSIESRAAEPRSVSDYQNANSSYYVENANDGSGYPVGTYINASSKGAPYNLPTTPWNTLKASDAKEIALITAKQTGDGYQWVIKFNKGHAPHENMIYWFALPAGQTPVGRTEFVTVNADGTNVQWSNGAGAGANKPLPEMWPYGVNDSRSWDYKIRNRSGQVIYDWPTVHINSLKDLARASDYFSEAGATPATKAFGRQTFEYINGERPTESPGVPKVYTFIGKGDASYTISFKTQGPTIDKLYYAAGGRALEYNQLFMYSQLYVESTQDYQQRLNGLRQVVNRTYRIGTTKRVEVSQGNVQTKKVLESTNLNIDDFMDDPLSYVKTPSNKVLGFYPTSANTNAFRPGGVNPLNEYQLSQLFTDDKLQQAARTGSPIRLMIGFDYPDAFGNGETLVPVNLTVLPEIQHNIKFFKNDDGQNIADKPASKQAGHPVFYVYAGNQGNASVNLGGSVTSIQPLRINLTSNENFTDKDWQITGIPRTLHIENSTNRTNNARERNIELVGNLLPGDYFGTIRFGRKEQLFEIRVKPHTPRITTTAEELRGTALQKVPVTVTDIPLDPSALVYLVIPTSQTRDGGSEADQIPSGYTKIATGTPDGVHSTITIRPEDYVVFIPPVGNQIRALIFYNNVVASNMSNAVTILPDDIPPTINNPVGLNAKYYRGDEVSFTMGVSDRHSGLKSTTITTLPSGWTSNLTKSDKKNGSLAISGRVSMNQAYNSDITFKVSATDNVNNTTNDSQSKHVTVHVGKISDDAHPIVLGNSEKVVVVNPTALTGDEKQRITTAFMNKNQNIRGYLASSNPVTVDNHGNVTLQYRDGSSTTLDATNVMTYEPVVKPEYQTANAAKTATVTIAKGQSFNIGDIKQYFTLSNGQAIPSSSFTNITSDRTIPTAQEVSQMNAGTQLYHIVATNAYHKDTEDFYITLKIIDVKQPEGDQRVYRMSTYDITTDEISKVKQAFINANRDAISFAEGDISVTNTPNGSNVSTITVNINKGRLTKSFTSNLNNMNFLRWVNFPQDYTVTWTNAKIANRPTDGGLSWSDDHKSLIYRYDATLGTQITTNDILTLLKATTTVPGLRNNIAGNEKAQAEAGGRPNYKTTGYSQSNPTSDGQRQFTLNGQVIQIMDIINPSNGFGGQPVTNSNVRANHSNSTVVSVNESAANGAGAFTIDHVVKNNSTHNAADAVYKAQLYLSPYGPKQYVEHLNQNTDNTNEAINIYFVPSDLVNPTISVGNYTNHQVFSGETFTNTITANDNFGVQSVTVPTTSQLTGTVDNNHQHVSATAPNVTSTTNKTINLVATDTSGNTATTSFNVTIKPLRDKYRVGTSSTAANPVRIANISNNATVSQADQTAIINSLTFTSNAPNRNYATASANEITSKTVSNVSRTGNNAQVTVTVTYQDGTTSTVTVPVKRVIPEIVAHSHYTVQGQDFPTGNGASASDYFKLSNGSAIPDATITWVSGQAPNKNNTTIGQDINVTAHILIDGETTPITKTATYKVVRTVPKQVFETARGVLYPGVSDMYDAKQYVKPVNNSWSTNAQHMNFQFTNSYGPSKDVVGISTRDIRVTYDNHQTQIIKILSKVKPDPPRIDGNSVTYKAGLTNQQIKINNVLSSSSIKLFKADNTPLTITNTTYGSGNTAVVTVSDALPNGEIKARSSISMNNVTYTTQDEHGRAIDVTRNESVDSNDSASVHVTPQLQATTEGAVFIKGGDGFDFGHVERFIQNPPHGATVAWHDNPDTWKNTVGNTHKTAVVTLPNGQGTRNVEVPVKVYPVANAKAPSRDVKGQNLTNGTDAINYITFDPNTNTNGITAVWANRQQPNNQQAGVQHLNVDVTYPGISAAKRVPVTVNVYQFEFPQTSYTTTVGGTLASGTQASGYAHIQNATGLPTDGFTYKWNNAATGTNDANWAAMNKPNTAQVINAKYDVIYNGHTFATSLPAKFVVKDVQPAKPTVTETAAGVITIAPGANQTVNTHAGNVTTYADKLVIKRNGNVVTTFTRHNNTSPWVKEASAANVAGIAGTNNGITVAAGTFNPADTIQAVATQGSGETISDEQRSDDFTVVAPQPNQATTKIWQNGHVDITPNNPSGHLINPTQAMDIAYTEKVGNGAEHSKTLNAVRGQNNQWTIANKPDYVTLDAHTGKVTFNANTIKPNSAITITPKAGTGHSASSNPSTLTAPAAHTVNTTEIVKDYGSNVTAAEINNAVQVANKRTATIKNGTAMPTNLAGGSTTTIPVTVTYNDSSTEEVQESIFTKADKRELITAKNHLDDPVSTDGKKPGTITQYNNAIHNAQQQINTAKTEAQQVINDERATPQQVNAALSKVQAAQTKINEAKALLQNKEDNSQLVTSKNNLQSSVNQVPSTTGMTQQSIDNYNAKKREAESEITAAQRVIDNGDATAQQISDEKHRVDNALTALNQAKQNLTADTHELEQAVHQLNRTGTTTGKKPASITAYNNSIRALQSDLTSAKNSANAIIQKPIRSVQEVQTALTNVNRVNDRLTLAINQLVPLADNSALRTAKTKLDEEINKSVTTDGMTQSSIQAYENAKRAGQTESTNAQNVINNGDATDQQIAAKKTKVEEKYNGLKQAIAGLTPDLAPLQAAKTQLQNDIDQPTSTTGMTSASVAAFNDKLSAARTKIQEIDRVLASHPDVATIRQNVTAANATKTALDQARNGLTVDKAPLENAKNQLQQSIDTQTSTTGMTQDSINAYNAKLTAARNKIQQINQVLAGSPTVDQINTNTSAANQAKSDLDHARQALTPDKAPLQTAKTQLEQSINQPTDTTGMTTASLNAYNQKLQAARQKLTEINQVLNGNPTVQNINDKVAEANQAKDQLNTARQGLTLDRQPAFTTLHGASNLNQAQQNNFTQQINAAPNHAALETIKSNITALNNAMTKLKDSVADNNSIKSGQNYTDATTANKQAYDNAVNAAKGVIGETTNPTMDVNTVNQKAETVKSTKGALDGQQNLQRAKTEATNAITHASDLNQTQKNALTQQVNNAQNVQAVNDIKQTTQSLNTAMTGLKRGVANHNQVVQSDNYVNADTNKKNDYNNAYNHANDIINGNAQHPVITPSDVNNALSNVTSKEQALNGEAKLNAAKQEANTALGQLNNLNNAQRQNLQSQINGAHQIETVNTIKQNATNLNSAMGNLRQAVADKEQVKRTEDYADADTAKQNAYNSAVSSAETIINQTTNPTMSVNDVNSATSAVTTNKNALNGDEKLAQSKTDAASAIDALPHLNNAQKADVKSKINAASNIAGVNTVKQQGTDLNTAMGNLQGAINDEQTTLNSQNYQDATPSKKTAYTNAVQAAKDILNKSNGQNKTKDQVTEAMNQVNSAKNNLDGTRLLDQAKQTAKQQLNNMTHLTTAQKTHLTNQINSGTTVAGVHTAQSNANTLDQAMNTLRQSIANKDATKASEDYVDANNDKQTAYNNAVAAAETIINANSNPEMNPSTITQKAEQVNSSKTALNGDENLATAKLNAKTYLNTLTSITDAQKNNLISQISSATRVSSVDTVKQNAQHLDQAMASLQNGINNESQVKSSEKYRDADTNKQQEYDNAITAAKAILNKQHGPNTAQNAVEAALQRVKTAKNALNGDAKLIAAQNAAKQHLGTLTHITTAQRNDLTNQISQATNLAGVESVKQSANSLDGAMGNLQTAINDKSGTLASQNFLDADEQKRNAYNQAVSNAETILNKQTGPNTAKTAVEQALNNVNSAKHALNGTQNLNNAKQAAITAINGASDLNQHQKDALKAQANGAQRVSNAQDVQRNATELNTAMGQLQHAIADKTTTLASSKFVNADSTKQNVYTTKVTNAEHIISGTPTVVTTPSEVTAAANQVNSAKQELNGDERLRVAKQNANTAIDALTQLNTPQKAKLKEQVGQANRLEDVQSVQTNGQSLNNAMKGLRDSIANETTVKASQNYTDASPNNQSTYNSAVSNAKGIINQTNNPTMDASAITQATTQVNNAKNGLNGAENLRNAQNTAKQNLNTLSHLTNNQKSAISSQIDRAGHVSEVTAAKNAATELNTQMGNLEQAIHDQNTVKQGVNFTDADKAKRDAYTNAVSRAETILNKTQGANTPKQDVEAAIQSVTSAKNALNGDQNVTNAKNAAKHALNNLTSINNAQKRDLTTKIDQATTVSGVEAVSNTGTQLNTAMANLQNGINDKTNTLASENYHDADSDKKTAYTQAVTNAENILNKNSGSNLDKAAVENALSQVTNAKGALNGNHNLEQAKSNANTTINGLQHLTTAQKDKLKQQVQQAQNVAGVDTVKSSANTLNGAMGTLRNSIQDNAATKNGQNYLDATESNKTNYNNAVDSANGVINATSNPNMDANAINQIATQVTSTKNALDGTHNLTQAKQTATNAIDGATNLNKAQKDALKAQVTSAQRVANVTSIQQTANELNTAMGQLQHGIDDENATKQTQKYRDAEQSKKTAYDQAVAAAKAILNKQTGSNSDKAAVDRALQQVTSTKDALNGDAKLAEAKAAAKQNLGTLNHITNAQRTDLEGQINQATTVDGVNTVKTNANTLDGAMNSLQGSINDKDATLRNQNYLDADESKRNAYTQAVTAAEGILNKQTGGNTSKADVDNALNAVTRAKAALNGADNLRNAKTSATNTINGLPHLTQLQKDNLKHQVEQAQNVAGVNGVKDKGNTLNTAMGALRTSIQNDNTTKTSQNYLDASDINKNNYNTAVNNANGVINATNNPNMDANAINGMANQVNTTKAALNGVQNLAQAKTNATNTINNAHDLNQKQKDALKTQVNNAQRVSDANNVQHTATELNGAMTVLKAAIADKERTKASGNYVNADQEKRQAYDSKVTNAENIINGTPNATLTVNDVNSATSQVNAAKTVLNGDNNLRVAKEHANNTIDGLAQLNNAQKAKLKEQVQSATTLDGVQTVKNSSQTLNTAMKGLRDSIANEATIKAGQNYTDASPNNRNEYDSAVTAAKAIINQTSNPTMEPNTITQATSQVTTKEQALNGAQNLAQAKTTAKNNLNNLTSINNAQKDALTRSIDGATTVAGVNQETVKATELNNAMHSLQNGINDETQTKQTQKYLDAEPSKKSAYDQAVNAAKAILTKASGQNVDKAAVEQALQNVNSTKTALNGDAKLNEAKAAAKQTLGTLTHINNAQRTALDNEITQATNVEGVNTVKAKAQQLDGAMGQLETSIRDKDTTLQSQNYQDADDAKRTAYSQAVNAAATILNKTSGGNTPKADVERAMQAVTQANTALNGIQNLERAKQAANTAITNASDLNTKQKEALKAQVTSAGRVSVANGVEHTATELNTAMTALKRAIADKADTKASGNYVNADANKRQAYDEKVTAAENIVSGTPTPTLTPSDVTNAATQVTNAKTQLNGNHNLEVAKQNANTAIDGLTSLNGPQKAKLKEQVGQATTLPNVQTVRDNAQTLNTAMKGLRDSIANEATIKAEQNYTDASPNNRSEYDSAVTAAKAIIGQTSSPTMNAQEINQAKDQVTAKQQALNGQENLTNAQINAKQHLNGLSDLTNAQKDAAKRQIEGATHVSEVTQAQNNADALNTAMTNLKNGIQDQNTIKQGVNFTDADEAKRNAYTNAVTQAEQILNKVQGPNTAKDNVESALQNVQRAKNDLNGNQNVANAKTTAKNALNNLTSINNAQNEALKSQIDSATTVAGVNQVSATASELNTAMSNLQNGINDEAATKAAQKYTDADSDKQTAYNDAVTAAKTLLDKTAGTNDNKAAVEQALQRVNTAKTALNGDARLNQAKNTAKQQLATMSHLTDAQKANLTSQIERGTTVAGVQGIQANAGTLNEAMNQLRQSIASKDATKASEDYHDANTDLQNAYNDAVTNAEGIISATNNPEMNPDTINQKASQVNSAKSALNGDEKLAAAKQTAKSDIGRLTDLNNAQRTAANAEVDQAPNLAAVTAAKNKATSLNTAMGNLKHALAEKDNTKRSVNYTDADQPKQQAYDTAVTQAEAITNANGSNANETQVQAALNQLNQAKNDLNGDNKVAQAKETAKRALASYSNLNNAQSTAATSQIDNATTVAGVTAAQNTANELNTAMGQLQNGINDQNTVKQQVNFTDADQGKKDAYTNAVTNAQGILDKAHGQNMTKAQVEAALNQVTTAKNALNGDANVRQAKSDAKANLGTLTHLNNAQKQDLTSQIEGATTVNGVNGVKTKAQDLDGAMQRLQSAIANKDQTKASENYIDADPTNKTAFDNAITQAESYLNKDHGANKDKQAVEQAIQSVTSTENALNGDANLQRAKTEATQAIDNLTHLNTPQKTALKQQVNAAQRVSGVTDLKNSATSLNNAMDQLKQAIADHDTIVAGGNYTNASPDKQGAYTDAYNAAKNIVNGSPNVITNAADVTAATQRVNNAETGLNGDTNLATAKQQAKDALRQMTHLSDAQKQSITVQIDNATQVTGVQSVKDNATNLDNAMNQLRNSIANKDEVKASQPYVDADRDKQNAYNTAVTSAENIINATSQPTLDPSAVTQAANQVNTNKTALNGAQNLANKKQETTANINQLSHLNNAQKQDLNTQVTNAPNISTVSQVKTKAEQLDQAMERLINGIQDKDQVKQSVNFTDADPEKQTAYNNAVTAAENIINQANGTNANQSQVEAALSTVTTTKQALNGDRKVTDAKNNANQTLSTLDNLNNAQKGAVTGNINQAHTVAEVTQAIQTAQELNTAMGNLKNSLNDKDTTLGSQNFADADPEKKNAYNEAVRNAENILNKSTGTNVSKDQVEAAMNQVNTTKAALNGTQNLEKAKQHANTAIDGLSHLTNAQKEALKQLVQQSTTVAEAQGNEQKANNVDAAMDKLRQSIADNATTKQNQNYTDSSPNKKDAYNNAVTTAQGIIDQTTSPTLDPTVINQAAGQVSTTKNALNGNENLEAAKQQATQSLGSLDNLNNAQKQAVTDQINGAHTVDEANQIKQNAQNLNTAMGNLKQAIADKDATKATVNFTDADQAKQQAYNTAVTNAENIISKANGGNATQTEVEQAIQQVNAAKQALNGNANVQHAKDEATALINSSNDLNQAQKDALKQQVQNATTVAGVNNVKQTAQELNNAMTQLKQGIADKEQTKADGNFVNADPDKQNAYKQAVAKAEALISGTPDVVVTPSEITAALNKVTQAKNDLNGNTNLATTKQNVQHAIDQLPNLNQAQRDEYSKQITQATLVPNVNAIQQAATTLNDAMTQLKQGIANKAQIKGSENYHDADTDKQTAYDNAVTKAEELLKQTTNPTMDPNTIQQALTKVNDTNQALNGNQKLADAKQAAKTNLGTLDHLNDAQKQALTTQVEQAPDIATVNNVKQNAQNLNNAMTNLSNALQDKTETLNSINFTDADQAKKDAYTNAVAHAEGILSKANGSNASQTEVEQAMQRVNEAKQALNGNDNVQRAKDAAKQVITNANDLNQAQKDALKQQVDAAQTVANVNTIKQTAQDLNQAMTQLKQGIADKDQTKANGNFVNADTDKQNAYNNAVAHAEQIISGTPNANVDPQQVAQALQQVTQAKGDLNGNHNLQVAKDNANTAIDQLPNLNQTQKTALKDQVSHAELVTGVNAIKQNADALNNAMGTLKQQIQANSQVPQSVDFTQADQDKQQAYNNAANQAQQIANGTPTPVLTPDAVTQAVTTMNQAKDALNGDEKLAQAKQDAIANLDTLRDLNQPQRDALRNQINQAQALATVEQTKQNAQNVNTAMSNLKQGIANKDTVKASENYHDADADKQTAYTNAVSQAEGIINQTTNPMLNPDDITRALTQVTDAKNGLNGEAKLATEKQNAKDAVNAMTHLNDAQKQALKGQIDQSPEIAIVNQVKQTATSLDHAMDQLSQAINDKAQTLADGNYLNADPDKQNAYKQAVAKAEALLNKQSGTNEVQAQVESITNEVNAAKQALNGNDNLANAKQQAKQQLANLTHLNDAQKQSFESQITQAPLVTDVTTINQKAQALDHAMDQLSQAINDKAQTLADGNYLNADPDKQNAYKQAVAKAEALLNKQSGTNEVQAQVESITNEVNAAKQALNGNDNLANAKQQAKQQLANLTHLNDAQKQSFESQITQAPLVTDVTTINQKAQALDHAMELLRNSVADNQATLASEDYHDATAQRQNDYNQAVTATNNIINQTTSPTMNPDEVNRATTQVNNTKVALDGDENLVAAKQQANNRLDQLDHLNNAQKQQLQSQITQSSDIAAVNGHKQTAESLNTAMGNLINAIADHQTVEQLGNFVNADTDKQTAYTTAVNEAEAMINKQTGQNANQTEVEQAITKVQTTLQALNGDHNLQVAKANATQAIDALTSLNDPQKTALKDQVTAATLVTAVHQIEQNANTLNQAMHGLRESIQDNAATKANSKYINEDQSEQQNYDQAVQAANNIINEQTATLDNNAINQAATTVNTTKAALHGDVKLQNDKDHAKQTVSQLTHLNNAQKHMEDTLIDSETTRTAVNHDLTEAQALDQLMDALQQSIADKDATRASSAYVNAEPNKKQSYDEAVQNAESIIAGLNNPTINKGNVTSATQAVTSSKNALDGVERLAQDKQTAGNSLNHLDQLTPAQQQALENQINNATTRDKVAEIIAQAQALNEAMKALKESIKDQPQTEASSKFINEDQAQKDAYTQAVQHAKDLINKTTDPTLAKSIIDQATQAVTDAKNNLHGDQKLDQDKQRATETLNNLSNLNTPQRQALENQINNAATRGEVAQKLTEAEALNQAMEALRNSIQDQQQTEAGSKFINEDKPQKDAYQAAVQNAKDLINQTNNPTLDKAQVEQLTQAVNQAKDNLHGDQKLADDKQHAVTDLNQLNGLNNPQRQALESQINNAATRDEVAQKLAEAKALDQAMQALRNSIQDQQQTESGSKFINEDKPQKDAYQAAVQNAKDLINQTGNPTLDKSQVEQLTQAVTTAKDNLHGDQKLARDQLQAVTTVNALPNLNHAQQQALTDAINAAPTRTEVAQHVQTATELDHAMETLKNKVDQVNTDKAQPNYTEASTDKKEAVDQALQAAESITDPTNGSNANKDAVDQALTKLQEKVNELNGNERVAEAKTQAKQTIDQLTHLNADQIATAKQNIDQATKLQPIAELVDQATQLNQSMDQLQQAVNEHANVEQTVDYTQADLDKQNAYKQAIADAENVLKQNANKQQVDQALQNILNAKQALNGDERVALAKTNGKHDIEQLNALNNAQQDGFKGRIDQSNDLNQIQQIVDEAKALNRVMDQLSQGITGNEGRTKGSTNYVNADTQVKQVYDEAVDKAKQALDKSTGQNLTAEQVIKLNDAVTAAKKALNGEEKLNNRKSEALQRLDQLTHLNNAQRQLAIQQINNAETLNKASRAINRATKLDNAMGAVQQYIDEQHLGVISSTNYINADDNLKANYDNAIANAAHELDKVQGNAIAKAEAEQLKQNIIDAQNALNGDQNLANAKDKANAFVNSLNGLNQQQQHLAHNAINNADTVSDVTDIVNNQIDLNDAMETLKHLVDNEIPNAEQTVNYQNAEDNAKTNFDDAKRLANTLLNSDNTNVNDINGAIQTVNDAIQNLNGDQRLQDAKDKAIQSINQALANKLKEIEASNATDQDKLIAKNKAEELANSIINNINKATSNQDVSQVQTAGNHAIEQVHANEIPKAKIDANKDVDKQVQALIDEIDRNPILTDKEKQALKDRINQILQQGHNDINNAMTKEEIEQAKAQLGQALQDIKDLVKAKESAKQDIDKQVQALIDEIDRNPILTDKEKQALKDRINQILQQGHNGINNAMTKEEIEQAKAQLGQALQDIKDLVKAKESAKQDIDKQVQALIDEIDRNPNLTDKEKQALKDRINQILQQGHNGINNAMTKEEIEHAKAQLAQALQDIKDLVKAKEDAKNAIKALANAKRDQINSNPDLTLEQKAKALKEIDEAEKRALENIENAQTKDQLNQGLNLGLDDIRNTHVWEVDAQPAVNEIFDATPEQILVNGELIVHRDDIITEQDILAHINLIDQLTAEIIDTPSTATISDSLTAKVEVTLLDGSKVIVNVPVKVVEKELTVVKQQAIESIENAAQQKINEINNHATLTPEQKEAAIAEVNKLKQQAIEQINNAADVHTVEEVQHQEQAHIEQFNPDQFTIDQAKSNAIKSISDAIQHMIDEINASKDLTDKEKQEAISKLNQLKDQSIQAIQRAQSIDEIAQQLEQFKAQLKAANPFAKELENRKKAAISKIKDISTDKIDRIRNSTIGTAEERQAAMNRINEIVLETIKDINNAQTPQQVEAALNNGIARILAVQIVTSDHSKPSSNSDGQSNSHLHVGYGTVNHPFNSSPIGHKKKLDQDDEIDPLHMRHFGDRIGNVIKNALGVVGISGLLASFWFFIAKRRRKEDEEEELEIRDNSKDKKKGSIEGTKHLPLLFAKRRRKEDEEDAIVEEKDSLNNDESLDKVKHTPFFLPKRRRKEDEEDVEVTNENTDEKVLQDNEHSPVLIAKRLKDKDGNVETTTSIESKDEDVPLLLAKKKNQKDNQSKGKKSASKKPSKKVAAKKKKKKSKKNKK</sequence>
<reference key="1">
    <citation type="journal article" date="2004" name="Proc. Natl. Acad. Sci. U.S.A.">
        <title>Complete genomes of two clinical Staphylococcus aureus strains: evidence for the rapid evolution of virulence and drug resistance.</title>
        <authorList>
            <person name="Holden M.T.G."/>
            <person name="Feil E.J."/>
            <person name="Lindsay J.A."/>
            <person name="Peacock S.J."/>
            <person name="Day N.P.J."/>
            <person name="Enright M.C."/>
            <person name="Foster T.J."/>
            <person name="Moore C.E."/>
            <person name="Hurst L."/>
            <person name="Atkin R."/>
            <person name="Barron A."/>
            <person name="Bason N."/>
            <person name="Bentley S.D."/>
            <person name="Chillingworth C."/>
            <person name="Chillingworth T."/>
            <person name="Churcher C."/>
            <person name="Clark L."/>
            <person name="Corton C."/>
            <person name="Cronin A."/>
            <person name="Doggett J."/>
            <person name="Dowd L."/>
            <person name="Feltwell T."/>
            <person name="Hance Z."/>
            <person name="Harris B."/>
            <person name="Hauser H."/>
            <person name="Holroyd S."/>
            <person name="Jagels K."/>
            <person name="James K.D."/>
            <person name="Lennard N."/>
            <person name="Line A."/>
            <person name="Mayes R."/>
            <person name="Moule S."/>
            <person name="Mungall K."/>
            <person name="Ormond D."/>
            <person name="Quail M.A."/>
            <person name="Rabbinowitsch E."/>
            <person name="Rutherford K.M."/>
            <person name="Sanders M."/>
            <person name="Sharp S."/>
            <person name="Simmonds M."/>
            <person name="Stevens K."/>
            <person name="Whitehead S."/>
            <person name="Barrell B.G."/>
            <person name="Spratt B.G."/>
            <person name="Parkhill J."/>
        </authorList>
    </citation>
    <scope>NUCLEOTIDE SEQUENCE [LARGE SCALE GENOMIC DNA]</scope>
    <source>
        <strain>MRSA252</strain>
    </source>
</reference>
<keyword id="KW-1003">Cell membrane</keyword>
<keyword id="KW-0472">Membrane</keyword>
<keyword id="KW-0677">Repeat</keyword>
<keyword id="KW-0732">Signal</keyword>
<keyword id="KW-0812">Transmembrane</keyword>
<keyword id="KW-1133">Transmembrane helix</keyword>
<comment type="subcellular location">
    <subcellularLocation>
        <location evidence="3">Cell membrane</location>
        <topology evidence="3">Single-pass membrane protein</topology>
    </subcellularLocation>
</comment>
<name>EBH_STAAR</name>
<feature type="signal peptide" evidence="1">
    <location>
        <begin position="1"/>
        <end position="39"/>
    </location>
</feature>
<feature type="chain" id="PRO_0000345980" description="Extracellular matrix-binding protein ebh">
    <location>
        <begin position="40"/>
        <end position="10746"/>
    </location>
</feature>
<feature type="transmembrane region" description="Helical" evidence="1">
    <location>
        <begin position="10552"/>
        <end position="10572"/>
    </location>
</feature>
<feature type="domain" description="FIVAR 1">
    <location>
        <begin position="2520"/>
        <end position="2576"/>
    </location>
</feature>
<feature type="domain" description="FIVAR 2">
    <location>
        <begin position="2606"/>
        <end position="2662"/>
    </location>
</feature>
<feature type="domain" description="FIVAR 3">
    <location>
        <begin position="2683"/>
        <end position="2746"/>
    </location>
</feature>
<feature type="domain" description="FIVAR 4">
    <location>
        <begin position="2776"/>
        <end position="2832"/>
    </location>
</feature>
<feature type="domain" description="FIVAR 5">
    <location>
        <begin position="2860"/>
        <end position="2915"/>
    </location>
</feature>
<feature type="domain" description="FIVAR 6">
    <location>
        <begin position="2943"/>
        <end position="2998"/>
    </location>
</feature>
<feature type="domain" description="FIVAR 7">
    <location>
        <begin position="3026"/>
        <end position="3081"/>
    </location>
</feature>
<feature type="domain" description="FIVAR 8">
    <location>
        <begin position="3150"/>
        <end position="3208"/>
    </location>
</feature>
<feature type="domain" description="FIVAR 9">
    <location>
        <begin position="3276"/>
        <end position="3335"/>
    </location>
</feature>
<feature type="domain" description="FIVAR 10">
    <location>
        <begin position="3403"/>
        <end position="3461"/>
    </location>
</feature>
<feature type="domain" description="FIVAR 11">
    <location>
        <begin position="3529"/>
        <end position="3587"/>
    </location>
</feature>
<feature type="domain" description="FIVAR 12">
    <location>
        <begin position="3655"/>
        <end position="3713"/>
    </location>
</feature>
<feature type="domain" description="FIVAR 13">
    <location>
        <begin position="3781"/>
        <end position="3839"/>
    </location>
</feature>
<feature type="domain" description="FIVAR 14">
    <location>
        <begin position="3907"/>
        <end position="3965"/>
    </location>
</feature>
<feature type="domain" description="FIVAR 15">
    <location>
        <begin position="4033"/>
        <end position="4091"/>
    </location>
</feature>
<feature type="domain" description="FIVAR 16">
    <location>
        <begin position="4159"/>
        <end position="4217"/>
    </location>
</feature>
<feature type="domain" description="FIVAR 17">
    <location>
        <begin position="4285"/>
        <end position="4343"/>
    </location>
</feature>
<feature type="domain" description="FIVAR 18">
    <location>
        <begin position="4411"/>
        <end position="4469"/>
    </location>
</feature>
<feature type="domain" description="FIVAR 19">
    <location>
        <begin position="4537"/>
        <end position="4595"/>
    </location>
</feature>
<feature type="domain" description="FIVAR 20">
    <location>
        <begin position="4663"/>
        <end position="4721"/>
    </location>
</feature>
<feature type="domain" description="FIVAR 21">
    <location>
        <begin position="4789"/>
        <end position="4847"/>
    </location>
</feature>
<feature type="domain" description="FIVAR 22">
    <location>
        <begin position="4915"/>
        <end position="4973"/>
    </location>
</feature>
<feature type="domain" description="FIVAR 23">
    <location>
        <begin position="5041"/>
        <end position="5099"/>
    </location>
</feature>
<feature type="domain" description="FIVAR 24">
    <location>
        <begin position="5167"/>
        <end position="5225"/>
    </location>
</feature>
<feature type="domain" description="FIVAR 25">
    <location>
        <begin position="5293"/>
        <end position="5351"/>
    </location>
</feature>
<feature type="domain" description="FIVAR 26">
    <location>
        <begin position="5419"/>
        <end position="5477"/>
    </location>
</feature>
<feature type="domain" description="FIVAR 27">
    <location>
        <begin position="5545"/>
        <end position="5603"/>
    </location>
</feature>
<feature type="domain" description="FIVAR 28">
    <location>
        <begin position="5671"/>
        <end position="5729"/>
    </location>
</feature>
<feature type="domain" description="FIVAR 29">
    <location>
        <begin position="5797"/>
        <end position="5855"/>
    </location>
</feature>
<feature type="domain" description="FIVAR 30">
    <location>
        <begin position="5923"/>
        <end position="5981"/>
    </location>
</feature>
<feature type="domain" description="FIVAR 31">
    <location>
        <begin position="6049"/>
        <end position="6107"/>
    </location>
</feature>
<feature type="domain" description="FIVAR 32">
    <location>
        <begin position="6175"/>
        <end position="6232"/>
    </location>
</feature>
<feature type="domain" description="FIVAR 33">
    <location>
        <begin position="6300"/>
        <end position="6358"/>
    </location>
</feature>
<feature type="domain" description="FIVAR 34">
    <location>
        <begin position="6426"/>
        <end position="6484"/>
    </location>
</feature>
<feature type="domain" description="FIVAR 35">
    <location>
        <begin position="6552"/>
        <end position="6610"/>
    </location>
</feature>
<feature type="domain" description="FIVAR 36">
    <location>
        <begin position="6678"/>
        <end position="6736"/>
    </location>
</feature>
<feature type="domain" description="FIVAR 37">
    <location>
        <begin position="6804"/>
        <end position="6862"/>
    </location>
</feature>
<feature type="domain" description="FIVAR 38">
    <location>
        <begin position="6930"/>
        <end position="6988"/>
    </location>
</feature>
<feature type="domain" description="FIVAR 39">
    <location>
        <begin position="7056"/>
        <end position="7114"/>
    </location>
</feature>
<feature type="domain" description="FIVAR 40">
    <location>
        <begin position="7182"/>
        <end position="7240"/>
    </location>
</feature>
<feature type="domain" description="FIVAR 41">
    <location>
        <begin position="7308"/>
        <end position="7366"/>
    </location>
</feature>
<feature type="domain" description="FIVAR 42">
    <location>
        <begin position="7434"/>
        <end position="7492"/>
    </location>
</feature>
<feature type="domain" description="FIVAR 43">
    <location>
        <begin position="7560"/>
        <end position="7618"/>
    </location>
</feature>
<feature type="domain" description="FIVAR 44">
    <location>
        <begin position="7686"/>
        <end position="7744"/>
    </location>
</feature>
<feature type="domain" description="FIVAR 45">
    <location>
        <begin position="7812"/>
        <end position="7870"/>
    </location>
</feature>
<feature type="domain" description="FIVAR 46">
    <location>
        <begin position="7938"/>
        <end position="7996"/>
    </location>
</feature>
<feature type="domain" description="FIVAR 47">
    <location>
        <begin position="8064"/>
        <end position="8125"/>
    </location>
</feature>
<feature type="domain" description="FIVAR 48">
    <location>
        <begin position="8190"/>
        <end position="8251"/>
    </location>
</feature>
<feature type="domain" description="FIVAR 49">
    <location>
        <begin position="8316"/>
        <end position="8374"/>
    </location>
</feature>
<feature type="domain" description="FIVAR 50">
    <location>
        <begin position="8442"/>
        <end position="8500"/>
    </location>
</feature>
<feature type="domain" description="FIVAR 51">
    <location>
        <begin position="8568"/>
        <end position="8625"/>
    </location>
</feature>
<feature type="domain" description="FIVAR 52">
    <location>
        <begin position="8693"/>
        <end position="8751"/>
    </location>
</feature>
<feature type="domain" description="FIVAR 53">
    <location>
        <begin position="8819"/>
        <end position="8877"/>
    </location>
</feature>
<feature type="domain" description="FIVAR 54">
    <location>
        <begin position="8945"/>
        <end position="9003"/>
    </location>
</feature>
<feature type="domain" description="FIVAR 55">
    <location>
        <begin position="9071"/>
        <end position="9129"/>
    </location>
</feature>
<feature type="domain" description="FIVAR 56">
    <location>
        <begin position="9197"/>
        <end position="9255"/>
    </location>
</feature>
<feature type="domain" description="FIVAR 57">
    <location>
        <begin position="9323"/>
        <end position="9377"/>
    </location>
</feature>
<feature type="domain" description="FIVAR 58">
    <location>
        <begin position="9445"/>
        <end position="9504"/>
    </location>
</feature>
<feature type="domain" description="FIVAR 59">
    <location>
        <begin position="9699"/>
        <end position="9755"/>
    </location>
</feature>
<feature type="region of interest" description="Disordered" evidence="2">
    <location>
        <begin position="41"/>
        <end position="174"/>
    </location>
</feature>
<feature type="region of interest" description="Disordered" evidence="2">
    <location>
        <begin position="246"/>
        <end position="274"/>
    </location>
</feature>
<feature type="region of interest" description="Disordered" evidence="2">
    <location>
        <begin position="1340"/>
        <end position="1372"/>
    </location>
</feature>
<feature type="region of interest" description="Disordered" evidence="2">
    <location>
        <begin position="7066"/>
        <end position="7085"/>
    </location>
</feature>
<feature type="region of interest" description="Disordered" evidence="2">
    <location>
        <begin position="10492"/>
        <end position="10530"/>
    </location>
</feature>
<feature type="region of interest" description="Disordered" evidence="2">
    <location>
        <begin position="10649"/>
        <end position="10746"/>
    </location>
</feature>
<feature type="compositionally biased region" description="Polar residues" evidence="2">
    <location>
        <begin position="41"/>
        <end position="59"/>
    </location>
</feature>
<feature type="compositionally biased region" description="Polar residues" evidence="2">
    <location>
        <begin position="67"/>
        <end position="113"/>
    </location>
</feature>
<feature type="compositionally biased region" description="Low complexity" evidence="2">
    <location>
        <begin position="120"/>
        <end position="130"/>
    </location>
</feature>
<feature type="compositionally biased region" description="Basic and acidic residues" evidence="2">
    <location>
        <begin position="132"/>
        <end position="158"/>
    </location>
</feature>
<feature type="compositionally biased region" description="Polar residues" evidence="2">
    <location>
        <begin position="162"/>
        <end position="173"/>
    </location>
</feature>
<feature type="compositionally biased region" description="Low complexity" evidence="2">
    <location>
        <begin position="248"/>
        <end position="263"/>
    </location>
</feature>
<feature type="compositionally biased region" description="Polar residues" evidence="2">
    <location>
        <begin position="1356"/>
        <end position="1372"/>
    </location>
</feature>
<feature type="compositionally biased region" description="Polar residues" evidence="2">
    <location>
        <begin position="7066"/>
        <end position="7080"/>
    </location>
</feature>
<feature type="compositionally biased region" description="Polar residues" evidence="2">
    <location>
        <begin position="10492"/>
        <end position="10507"/>
    </location>
</feature>
<feature type="compositionally biased region" description="Basic and acidic residues" evidence="2">
    <location>
        <begin position="10664"/>
        <end position="10674"/>
    </location>
</feature>
<feature type="compositionally biased region" description="Basic residues" evidence="2">
    <location>
        <begin position="10719"/>
        <end position="10746"/>
    </location>
</feature>
<dbReference type="EMBL" id="BX571856">
    <property type="protein sequence ID" value="CAG40444.1"/>
    <property type="molecule type" value="Genomic_DNA"/>
</dbReference>
<dbReference type="RefSeq" id="WP_001109390.1">
    <property type="nucleotide sequence ID" value="NC_002952.2"/>
</dbReference>
<dbReference type="SMR" id="Q6GGX3"/>
<dbReference type="KEGG" id="sar:SAR1447"/>
<dbReference type="HOGENOM" id="CLU_222673_0_0_9"/>
<dbReference type="Proteomes" id="UP000000596">
    <property type="component" value="Chromosome"/>
</dbReference>
<dbReference type="GO" id="GO:0005886">
    <property type="term" value="C:plasma membrane"/>
    <property type="evidence" value="ECO:0007669"/>
    <property type="project" value="UniProtKB-SubCell"/>
</dbReference>
<dbReference type="Gene3D" id="3.10.20.890">
    <property type="match status" value="1"/>
</dbReference>
<dbReference type="Gene3D" id="1.20.120.1850">
    <property type="entry name" value="Ebh helix bundles repeating unit (S and A modules)"/>
    <property type="match status" value="8"/>
</dbReference>
<dbReference type="Gene3D" id="1.20.5.420">
    <property type="entry name" value="Immunoglobulin FC, subunit C"/>
    <property type="match status" value="92"/>
</dbReference>
<dbReference type="InterPro" id="IPR011439">
    <property type="entry name" value="DUF1542"/>
</dbReference>
<dbReference type="InterPro" id="IPR026361">
    <property type="entry name" value="Ebh_dom"/>
</dbReference>
<dbReference type="InterPro" id="IPR051197">
    <property type="entry name" value="ECM-binding_protein"/>
</dbReference>
<dbReference type="InterPro" id="IPR020840">
    <property type="entry name" value="Extracell_matrix-bd_GA"/>
</dbReference>
<dbReference type="InterPro" id="IPR002988">
    <property type="entry name" value="GA_module"/>
</dbReference>
<dbReference type="InterPro" id="IPR009063">
    <property type="entry name" value="Ig/albumin-bd_sf"/>
</dbReference>
<dbReference type="InterPro" id="IPR005877">
    <property type="entry name" value="YSIRK_signal_dom"/>
</dbReference>
<dbReference type="NCBIfam" id="TIGR04264">
    <property type="entry name" value="hyperosmo_Ebh"/>
    <property type="match status" value="1"/>
</dbReference>
<dbReference type="NCBIfam" id="TIGR01168">
    <property type="entry name" value="YSIRK_signal"/>
    <property type="match status" value="1"/>
</dbReference>
<dbReference type="PANTHER" id="PTHR33150">
    <property type="entry name" value="EXTRACELLULAR MATRIX-BINDING PROTEIN EBH"/>
    <property type="match status" value="1"/>
</dbReference>
<dbReference type="PANTHER" id="PTHR33150:SF1">
    <property type="entry name" value="EXTRACELLULAR MATRIX-BINDING PROTEIN EBH"/>
    <property type="match status" value="1"/>
</dbReference>
<dbReference type="Pfam" id="PF07564">
    <property type="entry name" value="DUF1542"/>
    <property type="match status" value="8"/>
</dbReference>
<dbReference type="Pfam" id="PF07554">
    <property type="entry name" value="FIVAR"/>
    <property type="match status" value="51"/>
</dbReference>
<dbReference type="Pfam" id="PF01468">
    <property type="entry name" value="GA"/>
    <property type="match status" value="14"/>
</dbReference>
<dbReference type="Pfam" id="PF04650">
    <property type="entry name" value="YSIRK_signal"/>
    <property type="match status" value="1"/>
</dbReference>
<dbReference type="SMART" id="SM00844">
    <property type="entry name" value="GA"/>
    <property type="match status" value="54"/>
</dbReference>
<dbReference type="SUPFAM" id="SSF46997">
    <property type="entry name" value="Bacterial immunoglobulin/albumin-binding domains"/>
    <property type="match status" value="106"/>
</dbReference>
<gene>
    <name type="primary">ebh</name>
    <name type="ordered locus">SAR1447</name>
</gene>
<organism>
    <name type="scientific">Staphylococcus aureus (strain MRSA252)</name>
    <dbReference type="NCBI Taxonomy" id="282458"/>
    <lineage>
        <taxon>Bacteria</taxon>
        <taxon>Bacillati</taxon>
        <taxon>Bacillota</taxon>
        <taxon>Bacilli</taxon>
        <taxon>Bacillales</taxon>
        <taxon>Staphylococcaceae</taxon>
        <taxon>Staphylococcus</taxon>
    </lineage>
</organism>
<evidence type="ECO:0000255" key="1"/>
<evidence type="ECO:0000256" key="2">
    <source>
        <dbReference type="SAM" id="MobiDB-lite"/>
    </source>
</evidence>
<evidence type="ECO:0000305" key="3"/>
<protein>
    <recommendedName>
        <fullName>Extracellular matrix-binding protein ebh</fullName>
    </recommendedName>
    <alternativeName>
        <fullName>ECM-binding protein homolog</fullName>
    </alternativeName>
</protein>